<protein>
    <recommendedName>
        <fullName>Putative hydroxypyruvate isomerase</fullName>
        <ecNumber>5.3.1.22</ecNumber>
    </recommendedName>
</protein>
<feature type="chain" id="PRO_0000289244" description="Putative hydroxypyruvate isomerase">
    <location>
        <begin position="1"/>
        <end position="275"/>
    </location>
</feature>
<feature type="active site" description="Proton donor/acceptor" evidence="2">
    <location>
        <position position="147"/>
    </location>
</feature>
<feature type="active site" description="Proton donor/acceptor" evidence="2">
    <location>
        <position position="246"/>
    </location>
</feature>
<sequence>MRFSANISWLFPEVPDFPGRIKAASQSGFRAVEVAWPYATDRTLFKAALNTHRMSLVLLNTPPGNIEAGELGLAAVPGRQDEFRTGLNEAVSWASDLGCDRIHIMAGRVPLGLERQFIEKEMEETFIENLQYAADILGQAGMVGLLEPINSLITEPRYFLNTPQHAASILHKVKRPNLKLQMDLYHWQIMGGNLTQNIKTYFPLIGHVQIAQIPHRNEPDSPGELNFMYLFDLLQDLGYQGYVGCEYKPQGDTVKGLGWMEKYLKNCDGDEDKTK</sequence>
<gene>
    <name type="primary">hyi</name>
</gene>
<evidence type="ECO:0000250" key="1"/>
<evidence type="ECO:0000250" key="2">
    <source>
        <dbReference type="UniProtKB" id="Q9WYP7"/>
    </source>
</evidence>
<evidence type="ECO:0000305" key="3"/>
<comment type="function">
    <text evidence="1">Catalyzes the reversible isomerization between hydroxypyruvate and 2-hydroxy-3-oxopropanoate (also termed tartronate semialdehyde).</text>
</comment>
<comment type="catalytic activity">
    <reaction>
        <text>3-hydroxypyruvate = 2-hydroxy-3-oxopropanoate</text>
        <dbReference type="Rhea" id="RHEA:11952"/>
        <dbReference type="ChEBI" id="CHEBI:17180"/>
        <dbReference type="ChEBI" id="CHEBI:57978"/>
        <dbReference type="EC" id="5.3.1.22"/>
    </reaction>
</comment>
<comment type="similarity">
    <text evidence="3">Belongs to the hyi family.</text>
</comment>
<comment type="sequence caution" evidence="3">
    <conflict type="erroneous initiation">
        <sequence resource="EMBL-CDS" id="AAH68661"/>
    </conflict>
    <text>Truncated N-terminus.</text>
</comment>
<proteinExistence type="evidence at transcript level"/>
<keyword id="KW-0413">Isomerase</keyword>
<keyword id="KW-1185">Reference proteome</keyword>
<accession>Q6NUD4</accession>
<dbReference type="EC" id="5.3.1.22"/>
<dbReference type="EMBL" id="BC068661">
    <property type="protein sequence ID" value="AAH68661.1"/>
    <property type="status" value="ALT_INIT"/>
    <property type="molecule type" value="mRNA"/>
</dbReference>
<dbReference type="RefSeq" id="NP_001084705.1">
    <property type="nucleotide sequence ID" value="NM_001091236.1"/>
</dbReference>
<dbReference type="SMR" id="Q6NUD4"/>
<dbReference type="DNASU" id="414666"/>
<dbReference type="GeneID" id="414666"/>
<dbReference type="KEGG" id="xla:414666"/>
<dbReference type="AGR" id="Xenbase:XB-GENE-5847302"/>
<dbReference type="CTD" id="414666"/>
<dbReference type="Xenbase" id="XB-GENE-5847302">
    <property type="gene designation" value="hyi.L"/>
</dbReference>
<dbReference type="OrthoDB" id="4214675at2759"/>
<dbReference type="Proteomes" id="UP000186698">
    <property type="component" value="Chromosome 4L"/>
</dbReference>
<dbReference type="Bgee" id="414666">
    <property type="expression patterns" value="Expressed in liver and 20 other cell types or tissues"/>
</dbReference>
<dbReference type="GO" id="GO:0008903">
    <property type="term" value="F:hydroxypyruvate isomerase activity"/>
    <property type="evidence" value="ECO:0000318"/>
    <property type="project" value="GO_Central"/>
</dbReference>
<dbReference type="GO" id="GO:0046487">
    <property type="term" value="P:glyoxylate metabolic process"/>
    <property type="evidence" value="ECO:0000318"/>
    <property type="project" value="GO_Central"/>
</dbReference>
<dbReference type="FunFam" id="3.20.20.150:FF:000007">
    <property type="entry name" value="Hydroxypyruvate isomerase"/>
    <property type="match status" value="1"/>
</dbReference>
<dbReference type="Gene3D" id="3.20.20.150">
    <property type="entry name" value="Divalent-metal-dependent TIM barrel enzymes"/>
    <property type="match status" value="1"/>
</dbReference>
<dbReference type="InterPro" id="IPR026040">
    <property type="entry name" value="HyI-like"/>
</dbReference>
<dbReference type="InterPro" id="IPR050417">
    <property type="entry name" value="Sugar_Epim/Isomerase"/>
</dbReference>
<dbReference type="InterPro" id="IPR036237">
    <property type="entry name" value="Xyl_isomerase-like_sf"/>
</dbReference>
<dbReference type="InterPro" id="IPR013022">
    <property type="entry name" value="Xyl_isomerase-like_TIM-brl"/>
</dbReference>
<dbReference type="PANTHER" id="PTHR43489:SF6">
    <property type="entry name" value="HYDROXYPYRUVATE ISOMERASE-RELATED"/>
    <property type="match status" value="1"/>
</dbReference>
<dbReference type="PANTHER" id="PTHR43489">
    <property type="entry name" value="ISOMERASE"/>
    <property type="match status" value="1"/>
</dbReference>
<dbReference type="Pfam" id="PF01261">
    <property type="entry name" value="AP_endonuc_2"/>
    <property type="match status" value="1"/>
</dbReference>
<dbReference type="PIRSF" id="PIRSF006241">
    <property type="entry name" value="HyI"/>
    <property type="match status" value="1"/>
</dbReference>
<dbReference type="SUPFAM" id="SSF51658">
    <property type="entry name" value="Xylose isomerase-like"/>
    <property type="match status" value="1"/>
</dbReference>
<organism>
    <name type="scientific">Xenopus laevis</name>
    <name type="common">African clawed frog</name>
    <dbReference type="NCBI Taxonomy" id="8355"/>
    <lineage>
        <taxon>Eukaryota</taxon>
        <taxon>Metazoa</taxon>
        <taxon>Chordata</taxon>
        <taxon>Craniata</taxon>
        <taxon>Vertebrata</taxon>
        <taxon>Euteleostomi</taxon>
        <taxon>Amphibia</taxon>
        <taxon>Batrachia</taxon>
        <taxon>Anura</taxon>
        <taxon>Pipoidea</taxon>
        <taxon>Pipidae</taxon>
        <taxon>Xenopodinae</taxon>
        <taxon>Xenopus</taxon>
        <taxon>Xenopus</taxon>
    </lineage>
</organism>
<reference key="1">
    <citation type="submission" date="2004-04" db="EMBL/GenBank/DDBJ databases">
        <authorList>
            <consortium name="NIH - Xenopus Gene Collection (XGC) project"/>
        </authorList>
    </citation>
    <scope>NUCLEOTIDE SEQUENCE [LARGE SCALE MRNA]</scope>
    <source>
        <tissue>Ovary</tissue>
    </source>
</reference>
<name>HYI_XENLA</name>